<keyword id="KW-0119">Carbohydrate metabolism</keyword>
<keyword id="KW-1003">Cell membrane</keyword>
<keyword id="KW-0299">Galactose metabolism</keyword>
<keyword id="KW-0313">Glucose metabolism</keyword>
<keyword id="KW-0413">Isomerase</keyword>
<keyword id="KW-0472">Membrane</keyword>
<keyword id="KW-0520">NAD</keyword>
<keyword id="KW-1185">Reference proteome</keyword>
<gene>
    <name evidence="4" type="primary">gnu</name>
    <name evidence="3" type="synonym">gne</name>
    <name type="ordered locus">Z3206</name>
    <name type="ordered locus">ECs2847</name>
</gene>
<comment type="function">
    <text evidence="2 4">Involved in biosynthesis of the repeating tetrasaccharide unit of the O-antigen. Catalyzes the reversible epimerization of the hydroxyl group at position C4 of undecaprenyl pyrophosphate-N-acetylglucosamine (UndPP-GlcNAc) to yield undecaprenyl pyrophosphate-N-acetylgalactosamine (UndPP-GalNAc).</text>
</comment>
<comment type="catalytic activity">
    <reaction evidence="2">
        <text>N-acetyl-alpha-D-glucosaminyl-di-trans,octa-cis-undecaprenyl diphosphate = N-acetyl-alpha-D-galactosaminyl-di-trans,octa-cis-undecaprenyl diphosphate</text>
        <dbReference type="Rhea" id="RHEA:34103"/>
        <dbReference type="ChEBI" id="CHEBI:62959"/>
        <dbReference type="ChEBI" id="CHEBI:74214"/>
        <dbReference type="EC" id="5.1.3.26"/>
    </reaction>
</comment>
<comment type="cofactor">
    <cofactor evidence="1">
        <name>NAD(+)</name>
        <dbReference type="ChEBI" id="CHEBI:57540"/>
    </cofactor>
</comment>
<comment type="pathway">
    <text evidence="5">Bacterial outer membrane biogenesis; LPS O-antigen biosynthesis.</text>
</comment>
<comment type="subcellular location">
    <subcellularLocation>
        <location evidence="2">Cell membrane</location>
    </subcellularLocation>
</comment>
<comment type="similarity">
    <text evidence="5">Belongs to the NAD(P)-dependent epimerase/dehydratase family.</text>
</comment>
<name>GNU_ECO57</name>
<sequence>MNDNVLLIGASGFVGTRLLETAIADFNIKNLDKQQSHFYPEITQIGDVRDQQALDQALAGFDTVVLLAAEHRDDVSPTSLYYDVNVQGTRNVLAAMEKNGVKNIIFTSSVAVYGLNKHNPDENHPHDPFNHYGKSKWQAEEVLREWYNKAPTERSLTIIRPTVIFGERNRGNVYNLLKQIAGGKFMMVGAGTNYKSMAYVGNIVEFIKYKLKNVAAGYEVYNYVDKPDLNMNQLVAEVEQSLNKKIPSMHLPYPLGMLGGYCFDILSKITGKKYAVSSVRVKKFCATTQFDATKVHSSGFVAPYTLSQGLDRTLQYEFVHAKKDDITFVSE</sequence>
<protein>
    <recommendedName>
        <fullName evidence="3">N-acetyl-alpha-D-glucosaminyl-diphospho-ditrans,octacis-undecaprenol 4-epimerase</fullName>
        <ecNumber evidence="2">5.1.3.26</ecNumber>
    </recommendedName>
    <alternativeName>
        <fullName evidence="3">GlcNAc-P-P-Und 4-epimerase</fullName>
    </alternativeName>
</protein>
<evidence type="ECO:0000250" key="1">
    <source>
        <dbReference type="UniProtKB" id="P09147"/>
    </source>
</evidence>
<evidence type="ECO:0000269" key="2">
    <source>
    </source>
</evidence>
<evidence type="ECO:0000303" key="3">
    <source>
    </source>
</evidence>
<evidence type="ECO:0000303" key="4">
    <source>
    </source>
</evidence>
<evidence type="ECO:0000305" key="5"/>
<organism>
    <name type="scientific">Escherichia coli O157:H7</name>
    <dbReference type="NCBI Taxonomy" id="83334"/>
    <lineage>
        <taxon>Bacteria</taxon>
        <taxon>Pseudomonadati</taxon>
        <taxon>Pseudomonadota</taxon>
        <taxon>Gammaproteobacteria</taxon>
        <taxon>Enterobacterales</taxon>
        <taxon>Enterobacteriaceae</taxon>
        <taxon>Escherichia</taxon>
    </lineage>
</organism>
<feature type="chain" id="PRO_0000183266" description="N-acetyl-alpha-D-glucosaminyl-diphospho-ditrans,octacis-undecaprenol 4-epimerase">
    <location>
        <begin position="1"/>
        <end position="331"/>
    </location>
</feature>
<feature type="active site" description="Proton acceptor" evidence="1">
    <location>
        <position position="132"/>
    </location>
</feature>
<feature type="binding site" evidence="1">
    <location>
        <begin position="13"/>
        <end position="14"/>
    </location>
    <ligand>
        <name>NAD(+)</name>
        <dbReference type="ChEBI" id="CHEBI:57540"/>
    </ligand>
</feature>
<feature type="binding site" evidence="1">
    <location>
        <begin position="34"/>
        <end position="39"/>
    </location>
    <ligand>
        <name>NAD(+)</name>
        <dbReference type="ChEBI" id="CHEBI:57540"/>
    </ligand>
</feature>
<feature type="binding site" evidence="1">
    <location>
        <begin position="47"/>
        <end position="48"/>
    </location>
    <ligand>
        <name>NAD(+)</name>
        <dbReference type="ChEBI" id="CHEBI:57540"/>
    </ligand>
</feature>
<feature type="binding site" evidence="1">
    <location>
        <position position="109"/>
    </location>
    <ligand>
        <name>NAD(+)</name>
        <dbReference type="ChEBI" id="CHEBI:57540"/>
    </ligand>
</feature>
<feature type="binding site" evidence="1">
    <location>
        <position position="109"/>
    </location>
    <ligand>
        <name>substrate</name>
    </ligand>
</feature>
<feature type="binding site" evidence="1">
    <location>
        <position position="132"/>
    </location>
    <ligand>
        <name>NAD(+)</name>
        <dbReference type="ChEBI" id="CHEBI:57540"/>
    </ligand>
</feature>
<feature type="binding site" evidence="1">
    <location>
        <position position="132"/>
    </location>
    <ligand>
        <name>substrate</name>
    </ligand>
</feature>
<feature type="binding site" evidence="1">
    <location>
        <position position="136"/>
    </location>
    <ligand>
        <name>NAD(+)</name>
        <dbReference type="ChEBI" id="CHEBI:57540"/>
    </ligand>
</feature>
<feature type="binding site" evidence="1">
    <location>
        <begin position="183"/>
        <end position="184"/>
    </location>
    <ligand>
        <name>substrate</name>
    </ligand>
</feature>
<feature type="binding site" evidence="1">
    <location>
        <begin position="199"/>
        <end position="201"/>
    </location>
    <ligand>
        <name>substrate</name>
    </ligand>
</feature>
<dbReference type="EC" id="5.1.3.26" evidence="2"/>
<dbReference type="EMBL" id="AF461121">
    <property type="protein sequence ID" value="AAL67550.1"/>
    <property type="molecule type" value="Genomic_DNA"/>
</dbReference>
<dbReference type="EMBL" id="AE005174">
    <property type="protein sequence ID" value="AAG57102.1"/>
    <property type="molecule type" value="Genomic_DNA"/>
</dbReference>
<dbReference type="EMBL" id="BA000007">
    <property type="protein sequence ID" value="BAB36270.1"/>
    <property type="molecule type" value="Genomic_DNA"/>
</dbReference>
<dbReference type="PIR" id="B85830">
    <property type="entry name" value="B85830"/>
</dbReference>
<dbReference type="PIR" id="G90984">
    <property type="entry name" value="G90984"/>
</dbReference>
<dbReference type="RefSeq" id="NP_310874.1">
    <property type="nucleotide sequence ID" value="NC_002695.1"/>
</dbReference>
<dbReference type="RefSeq" id="WP_000999466.1">
    <property type="nucleotide sequence ID" value="NZ_VOAI01000013.1"/>
</dbReference>
<dbReference type="SMR" id="Q8X7P7"/>
<dbReference type="STRING" id="155864.Z3206"/>
<dbReference type="GeneID" id="912320"/>
<dbReference type="KEGG" id="ece:Z3206"/>
<dbReference type="KEGG" id="ecs:ECs_2847"/>
<dbReference type="PATRIC" id="fig|386585.9.peg.2980"/>
<dbReference type="eggNOG" id="COG0451">
    <property type="taxonomic scope" value="Bacteria"/>
</dbReference>
<dbReference type="HOGENOM" id="CLU_007383_6_2_6"/>
<dbReference type="OMA" id="VVIIRPV"/>
<dbReference type="BioCyc" id="MetaCyc:MONOMER-18065"/>
<dbReference type="UniPathway" id="UPA00281"/>
<dbReference type="Proteomes" id="UP000000558">
    <property type="component" value="Chromosome"/>
</dbReference>
<dbReference type="Proteomes" id="UP000002519">
    <property type="component" value="Chromosome"/>
</dbReference>
<dbReference type="GO" id="GO:0016020">
    <property type="term" value="C:membrane"/>
    <property type="evidence" value="ECO:0000314"/>
    <property type="project" value="UniProtKB"/>
</dbReference>
<dbReference type="GO" id="GO:0005886">
    <property type="term" value="C:plasma membrane"/>
    <property type="evidence" value="ECO:0007669"/>
    <property type="project" value="UniProtKB-SubCell"/>
</dbReference>
<dbReference type="GO" id="GO:0016857">
    <property type="term" value="F:racemase and epimerase activity, acting on carbohydrates and derivatives"/>
    <property type="evidence" value="ECO:0000314"/>
    <property type="project" value="UniProtKB"/>
</dbReference>
<dbReference type="GO" id="GO:0006012">
    <property type="term" value="P:galactose metabolic process"/>
    <property type="evidence" value="ECO:0007669"/>
    <property type="project" value="UniProtKB-KW"/>
</dbReference>
<dbReference type="GO" id="GO:0006006">
    <property type="term" value="P:glucose metabolic process"/>
    <property type="evidence" value="ECO:0007669"/>
    <property type="project" value="UniProtKB-KW"/>
</dbReference>
<dbReference type="GO" id="GO:0009103">
    <property type="term" value="P:lipopolysaccharide biosynthetic process"/>
    <property type="evidence" value="ECO:0000314"/>
    <property type="project" value="UniProtKB"/>
</dbReference>
<dbReference type="GO" id="GO:0009243">
    <property type="term" value="P:O antigen biosynthetic process"/>
    <property type="evidence" value="ECO:0007669"/>
    <property type="project" value="UniProtKB-UniPathway"/>
</dbReference>
<dbReference type="CDD" id="cd05238">
    <property type="entry name" value="Gne_like_SDR_e"/>
    <property type="match status" value="1"/>
</dbReference>
<dbReference type="FunFam" id="3.40.50.720:FF:000347">
    <property type="entry name" value="UDP-N-acetylglucosamine 4-epimerase"/>
    <property type="match status" value="1"/>
</dbReference>
<dbReference type="Gene3D" id="3.40.50.720">
    <property type="entry name" value="NAD(P)-binding Rossmann-like Domain"/>
    <property type="match status" value="1"/>
</dbReference>
<dbReference type="InterPro" id="IPR001509">
    <property type="entry name" value="Epimerase_deHydtase"/>
</dbReference>
<dbReference type="InterPro" id="IPR050177">
    <property type="entry name" value="Lipid_A_modif_metabolic_enz"/>
</dbReference>
<dbReference type="InterPro" id="IPR036291">
    <property type="entry name" value="NAD(P)-bd_dom_sf"/>
</dbReference>
<dbReference type="PANTHER" id="PTHR43245">
    <property type="entry name" value="BIFUNCTIONAL POLYMYXIN RESISTANCE PROTEIN ARNA"/>
    <property type="match status" value="1"/>
</dbReference>
<dbReference type="PANTHER" id="PTHR43245:SF58">
    <property type="entry name" value="BLL5923 PROTEIN"/>
    <property type="match status" value="1"/>
</dbReference>
<dbReference type="Pfam" id="PF01370">
    <property type="entry name" value="Epimerase"/>
    <property type="match status" value="1"/>
</dbReference>
<dbReference type="SUPFAM" id="SSF51735">
    <property type="entry name" value="NAD(P)-binding Rossmann-fold domains"/>
    <property type="match status" value="1"/>
</dbReference>
<proteinExistence type="evidence at protein level"/>
<accession>Q8X7P7</accession>
<reference key="1">
    <citation type="journal article" date="2002" name="J. Bacteriol.">
        <title>The O-antigen gene cluster of Escherichia coli O55:H7 and identification of a new UDP-GlcNAc C4 epimerase gene.</title>
        <authorList>
            <person name="Wang L."/>
            <person name="Huskic S."/>
            <person name="Cisterne A."/>
            <person name="Rothemund D."/>
            <person name="Reeves P.R."/>
        </authorList>
    </citation>
    <scope>NUCLEOTIDE SEQUENCE [GENOMIC DNA]</scope>
    <source>
        <strain>O55:H7</strain>
    </source>
</reference>
<reference key="2">
    <citation type="journal article" date="2001" name="Nature">
        <title>Genome sequence of enterohaemorrhagic Escherichia coli O157:H7.</title>
        <authorList>
            <person name="Perna N.T."/>
            <person name="Plunkett G. III"/>
            <person name="Burland V."/>
            <person name="Mau B."/>
            <person name="Glasner J.D."/>
            <person name="Rose D.J."/>
            <person name="Mayhew G.F."/>
            <person name="Evans P.S."/>
            <person name="Gregor J."/>
            <person name="Kirkpatrick H.A."/>
            <person name="Posfai G."/>
            <person name="Hackett J."/>
            <person name="Klink S."/>
            <person name="Boutin A."/>
            <person name="Shao Y."/>
            <person name="Miller L."/>
            <person name="Grotbeck E.J."/>
            <person name="Davis N.W."/>
            <person name="Lim A."/>
            <person name="Dimalanta E.T."/>
            <person name="Potamousis K."/>
            <person name="Apodaca J."/>
            <person name="Anantharaman T.S."/>
            <person name="Lin J."/>
            <person name="Yen G."/>
            <person name="Schwartz D.C."/>
            <person name="Welch R.A."/>
            <person name="Blattner F.R."/>
        </authorList>
    </citation>
    <scope>NUCLEOTIDE SEQUENCE [LARGE SCALE GENOMIC DNA]</scope>
    <source>
        <strain>O157:H7 / EDL933 / ATCC 700927 / EHEC</strain>
    </source>
</reference>
<reference key="3">
    <citation type="journal article" date="2001" name="DNA Res.">
        <title>Complete genome sequence of enterohemorrhagic Escherichia coli O157:H7 and genomic comparison with a laboratory strain K-12.</title>
        <authorList>
            <person name="Hayashi T."/>
            <person name="Makino K."/>
            <person name="Ohnishi M."/>
            <person name="Kurokawa K."/>
            <person name="Ishii K."/>
            <person name="Yokoyama K."/>
            <person name="Han C.-G."/>
            <person name="Ohtsubo E."/>
            <person name="Nakayama K."/>
            <person name="Murata T."/>
            <person name="Tanaka M."/>
            <person name="Tobe T."/>
            <person name="Iida T."/>
            <person name="Takami H."/>
            <person name="Honda T."/>
            <person name="Sasakawa C."/>
            <person name="Ogasawara N."/>
            <person name="Yasunaga T."/>
            <person name="Kuhara S."/>
            <person name="Shiba T."/>
            <person name="Hattori M."/>
            <person name="Shinagawa H."/>
        </authorList>
    </citation>
    <scope>NUCLEOTIDE SEQUENCE [LARGE SCALE GENOMIC DNA]</scope>
    <source>
        <strain>O157:H7 / Sakai / RIMD 0509952 / EHEC</strain>
    </source>
</reference>
<reference key="4">
    <citation type="journal article" date="2010" name="J. Biol. Chem.">
        <title>A novel epimerase that converts GlcNAc-P-P-undecaprenol to GalNAc-P-P-undecaprenol in Escherichia coli O157.</title>
        <authorList>
            <person name="Rush J.S."/>
            <person name="Alaimo C."/>
            <person name="Robbiani R."/>
            <person name="Wacker M."/>
            <person name="Waechter C.J."/>
        </authorList>
    </citation>
    <scope>FUNCTION</scope>
    <scope>CATALYTIC ACTIVITY</scope>
    <scope>SUBCELLULAR LOCATION</scope>
</reference>
<reference key="5">
    <citation type="journal article" date="2013" name="PLoS ONE">
        <title>Biosynthesis of UDP-GlcNAc, UndPP-GlcNAc and UDP-GlcNAcA involves three easily distinguished 4-epimerase enzymes, Gne, Gnu and GnaB.</title>
        <authorList>
            <person name="Cunneen M.M."/>
            <person name="Liu B."/>
            <person name="Wang L."/>
            <person name="Reeves P.R."/>
        </authorList>
    </citation>
    <scope>FUNCTION</scope>
</reference>